<organism>
    <name type="scientific">Drosophila melanogaster</name>
    <name type="common">Fruit fly</name>
    <dbReference type="NCBI Taxonomy" id="7227"/>
    <lineage>
        <taxon>Eukaryota</taxon>
        <taxon>Metazoa</taxon>
        <taxon>Ecdysozoa</taxon>
        <taxon>Arthropoda</taxon>
        <taxon>Hexapoda</taxon>
        <taxon>Insecta</taxon>
        <taxon>Pterygota</taxon>
        <taxon>Neoptera</taxon>
        <taxon>Endopterygota</taxon>
        <taxon>Diptera</taxon>
        <taxon>Brachycera</taxon>
        <taxon>Muscomorpha</taxon>
        <taxon>Ephydroidea</taxon>
        <taxon>Drosophilidae</taxon>
        <taxon>Drosophila</taxon>
        <taxon>Sophophora</taxon>
    </lineage>
</organism>
<comment type="subcellular location">
    <subcellularLocation>
        <location evidence="1">Cell membrane</location>
        <topology evidence="1">Single-pass type II membrane protein</topology>
    </subcellularLocation>
</comment>
<comment type="alternative products">
    <event type="alternative splicing"/>
    <isoform>
        <id>B7Z0K8-1</id>
        <name evidence="3">D</name>
        <sequence type="displayed"/>
    </isoform>
    <isoform>
        <id>B7Z0K8-2</id>
        <name evidence="3">C</name>
        <sequence type="described" ref="VSP_053159 VSP_053160 VSP_053163"/>
    </isoform>
    <isoform>
        <id>B7Z0K8-3</id>
        <name evidence="3">E</name>
        <sequence type="described" ref="VSP_053161 VSP_053162"/>
    </isoform>
    <isoform>
        <id>B7Z0K8-4</id>
        <name evidence="3">F</name>
        <sequence type="described" ref="VSP_053163"/>
    </isoform>
</comment>
<sequence>MRKHKAPPSGSPRTMAQDNSQSEPSGGNGESPAATTAAAASVEAPQQSLLLGHNAADASAAAVASRLAPPPCQHPINNSNNNSNISNNSSNSSSSKERPRPTVRFISLLHVASYVLCLCAFSFALYGNVRQTRLEQRMQRLQQLDARIVELELRLEQQQLLHWPAEQTQVLASHPSDRDSSNSNNGSQHLELHVRRELHRLRRDVSHLQLTRRQQRRQAAEAAAAAASGEGGSGGGQCQCQPGPPGPPGPPGKRGKRGKKGDSGEKGDPGLNGISGEKGAAGKPGDKGQKGDVGHPGMDVFQTVKGLKRSVTTLHGGTLGYAEIVAVKDLQEAGVNVSASTVIKLKGEPGEPGPPGPPGEAGQPGAPGERGPPGEIGAQGPQGEAGQPGVAGPPGVAGAPGTKGDKGDRGDRGLTTTIKGDEFPTGIIEGPPGPAGPPGPPGEPGARGEPGPIGPAGPPGEKGPRGKRGKRIFGPGGTKIDEDYDDPPVTLLRGPPGPPGIAGKDGRDGRDGSKGEPGEPGEPGSLGPRGLDGLPGEPGIEGPPGLPGYQGPPGEKGDRGDIGPPGLMGPPGLPGPPGYPGVKGDKGDRGDSYRKMRRRQDDGMSDAPHMPTIEYLYGPPGPPGPMGPPGHTGSQGERGLDGRKGDPGEKGHKGDQGPMGLPGPMGMRGESGPSGPSGKAGIPGAQGETGHKGERGDPGLPGTDGIPGQEGPRGEQGSRGDAGPPGKRGRKGDRGDKGEQGVPGLDAPCPLGADGLPLPGCGWRPPKEPIISTPVHKDYLPDVTQPESNTSDYEQEEEEDDEQAEDNENEYDEYQDNLHNNE</sequence>
<keyword id="KW-0025">Alternative splicing</keyword>
<keyword id="KW-1003">Cell membrane</keyword>
<keyword id="KW-0175">Coiled coil</keyword>
<keyword id="KW-0176">Collagen</keyword>
<keyword id="KW-0472">Membrane</keyword>
<keyword id="KW-1185">Reference proteome</keyword>
<keyword id="KW-0677">Repeat</keyword>
<keyword id="KW-0735">Signal-anchor</keyword>
<keyword id="KW-0812">Transmembrane</keyword>
<keyword id="KW-1133">Transmembrane helix</keyword>
<accession>B7Z0K8</accession>
<accession>B7Z0K6</accession>
<accession>B7Z0K7</accession>
<accession>B7Z0K9</accession>
<accession>Q86NZ7</accession>
<protein>
    <recommendedName>
        <fullName>Collagen alpha chain CG42342</fullName>
    </recommendedName>
</protein>
<proteinExistence type="evidence at transcript level"/>
<evidence type="ECO:0000255" key="1"/>
<evidence type="ECO:0000256" key="2">
    <source>
        <dbReference type="SAM" id="MobiDB-lite"/>
    </source>
</evidence>
<evidence type="ECO:0000269" key="3">
    <source>
    </source>
</evidence>
<evidence type="ECO:0000303" key="4">
    <source>
    </source>
</evidence>
<evidence type="ECO:0000303" key="5">
    <source ref="3"/>
</evidence>
<evidence type="ECO:0000305" key="6"/>
<evidence type="ECO:0000312" key="7">
    <source>
        <dbReference type="EMBL" id="AAO39561.1"/>
    </source>
</evidence>
<evidence type="ECO:0000312" key="8">
    <source>
        <dbReference type="EMBL" id="ACL83519.1"/>
    </source>
</evidence>
<name>COLL1_DROME</name>
<dbReference type="EMBL" id="AE014297">
    <property type="protein sequence ID" value="ACL83519.1"/>
    <property type="molecule type" value="Genomic_DNA"/>
</dbReference>
<dbReference type="EMBL" id="AE014297">
    <property type="protein sequence ID" value="ACL83520.1"/>
    <property type="molecule type" value="Genomic_DNA"/>
</dbReference>
<dbReference type="EMBL" id="AE014297">
    <property type="protein sequence ID" value="ACL83521.1"/>
    <property type="molecule type" value="Genomic_DNA"/>
</dbReference>
<dbReference type="EMBL" id="AE014297">
    <property type="protein sequence ID" value="ACL83522.1"/>
    <property type="molecule type" value="Genomic_DNA"/>
</dbReference>
<dbReference type="EMBL" id="BT003557">
    <property type="protein sequence ID" value="AAO39561.1"/>
    <property type="molecule type" value="mRNA"/>
</dbReference>
<dbReference type="RefSeq" id="NP_001138061.1">
    <molecule id="B7Z0K8-1"/>
    <property type="nucleotide sequence ID" value="NM_001144589.3"/>
</dbReference>
<dbReference type="RefSeq" id="NP_001138062.2">
    <property type="nucleotide sequence ID" value="NM_001144590.3"/>
</dbReference>
<dbReference type="RefSeq" id="NP_001138063.2">
    <property type="nucleotide sequence ID" value="NM_001144591.3"/>
</dbReference>
<dbReference type="RefSeq" id="NP_001138064.2">
    <property type="nucleotide sequence ID" value="NM_001144592.3"/>
</dbReference>
<dbReference type="SMR" id="B7Z0K8"/>
<dbReference type="BioGRID" id="928290">
    <property type="interactions" value="1"/>
</dbReference>
<dbReference type="FunCoup" id="B7Z0K8">
    <property type="interactions" value="11"/>
</dbReference>
<dbReference type="STRING" id="7227.FBpp0292667"/>
<dbReference type="PaxDb" id="7227-FBpp0292667"/>
<dbReference type="EnsemblMetazoa" id="FBtr0299894">
    <molecule id="B7Z0K8-1"/>
    <property type="protein sequence ID" value="FBpp0289172"/>
    <property type="gene ID" value="FBgn0259244"/>
</dbReference>
<dbReference type="GeneID" id="7354466"/>
<dbReference type="KEGG" id="dme:Dmel_CG42342"/>
<dbReference type="UCSC" id="CG42342-RC">
    <property type="organism name" value="d. melanogaster"/>
</dbReference>
<dbReference type="AGR" id="FB:FBgn0259244"/>
<dbReference type="FlyBase" id="FBgn0259244">
    <property type="gene designation" value="CG42342"/>
</dbReference>
<dbReference type="VEuPathDB" id="VectorBase:FBgn0259244"/>
<dbReference type="eggNOG" id="KOG3544">
    <property type="taxonomic scope" value="Eukaryota"/>
</dbReference>
<dbReference type="InParanoid" id="B7Z0K8"/>
<dbReference type="OrthoDB" id="8964326at2759"/>
<dbReference type="Reactome" id="R-DME-1650814">
    <property type="pathway name" value="Collagen biosynthesis and modifying enzymes"/>
</dbReference>
<dbReference type="Reactome" id="R-DME-216083">
    <property type="pathway name" value="Integrin cell surface interactions"/>
</dbReference>
<dbReference type="BioGRID-ORCS" id="7354466">
    <property type="hits" value="0 hits in 3 CRISPR screens"/>
</dbReference>
<dbReference type="ChiTaRS" id="CG42342">
    <property type="organism name" value="fly"/>
</dbReference>
<dbReference type="GenomeRNAi" id="7354466"/>
<dbReference type="PRO" id="PR:B7Z0K8"/>
<dbReference type="Proteomes" id="UP000000803">
    <property type="component" value="Chromosome 3R"/>
</dbReference>
<dbReference type="Bgee" id="FBgn0259244">
    <property type="expression patterns" value="Expressed in adult astrocyte-like glial cell in post-embryonic organism and 242 other cell types or tissues"/>
</dbReference>
<dbReference type="ExpressionAtlas" id="B7Z0K8">
    <property type="expression patterns" value="baseline and differential"/>
</dbReference>
<dbReference type="GO" id="GO:0005604">
    <property type="term" value="C:basement membrane"/>
    <property type="evidence" value="ECO:0000318"/>
    <property type="project" value="GO_Central"/>
</dbReference>
<dbReference type="GO" id="GO:0005594">
    <property type="term" value="C:collagen type IX trimer"/>
    <property type="evidence" value="ECO:0000318"/>
    <property type="project" value="GO_Central"/>
</dbReference>
<dbReference type="GO" id="GO:0005615">
    <property type="term" value="C:extracellular space"/>
    <property type="evidence" value="ECO:0000318"/>
    <property type="project" value="GO_Central"/>
</dbReference>
<dbReference type="GO" id="GO:0005886">
    <property type="term" value="C:plasma membrane"/>
    <property type="evidence" value="ECO:0007669"/>
    <property type="project" value="UniProtKB-SubCell"/>
</dbReference>
<dbReference type="GO" id="GO:0030020">
    <property type="term" value="F:extracellular matrix structural constituent conferring tensile strength"/>
    <property type="evidence" value="ECO:0000318"/>
    <property type="project" value="GO_Central"/>
</dbReference>
<dbReference type="InterPro" id="IPR008160">
    <property type="entry name" value="Collagen"/>
</dbReference>
<dbReference type="InterPro" id="IPR050938">
    <property type="entry name" value="Collagen_Structural_Proteins"/>
</dbReference>
<dbReference type="PANTHER" id="PTHR37456:SF6">
    <property type="entry name" value="COLLAGEN ALPHA-1(XXIII) CHAIN-LIKE ISOFORM X2"/>
    <property type="match status" value="1"/>
</dbReference>
<dbReference type="PANTHER" id="PTHR37456">
    <property type="entry name" value="SI:CH211-266K2.1"/>
    <property type="match status" value="1"/>
</dbReference>
<dbReference type="Pfam" id="PF01391">
    <property type="entry name" value="Collagen"/>
    <property type="match status" value="7"/>
</dbReference>
<reference evidence="8" key="1">
    <citation type="journal article" date="2000" name="Science">
        <title>The genome sequence of Drosophila melanogaster.</title>
        <authorList>
            <person name="Adams M.D."/>
            <person name="Celniker S.E."/>
            <person name="Holt R.A."/>
            <person name="Evans C.A."/>
            <person name="Gocayne J.D."/>
            <person name="Amanatides P.G."/>
            <person name="Scherer S.E."/>
            <person name="Li P.W."/>
            <person name="Hoskins R.A."/>
            <person name="Galle R.F."/>
            <person name="George R.A."/>
            <person name="Lewis S.E."/>
            <person name="Richards S."/>
            <person name="Ashburner M."/>
            <person name="Henderson S.N."/>
            <person name="Sutton G.G."/>
            <person name="Wortman J.R."/>
            <person name="Yandell M.D."/>
            <person name="Zhang Q."/>
            <person name="Chen L.X."/>
            <person name="Brandon R.C."/>
            <person name="Rogers Y.-H.C."/>
            <person name="Blazej R.G."/>
            <person name="Champe M."/>
            <person name="Pfeiffer B.D."/>
            <person name="Wan K.H."/>
            <person name="Doyle C."/>
            <person name="Baxter E.G."/>
            <person name="Helt G."/>
            <person name="Nelson C.R."/>
            <person name="Miklos G.L.G."/>
            <person name="Abril J.F."/>
            <person name="Agbayani A."/>
            <person name="An H.-J."/>
            <person name="Andrews-Pfannkoch C."/>
            <person name="Baldwin D."/>
            <person name="Ballew R.M."/>
            <person name="Basu A."/>
            <person name="Baxendale J."/>
            <person name="Bayraktaroglu L."/>
            <person name="Beasley E.M."/>
            <person name="Beeson K.Y."/>
            <person name="Benos P.V."/>
            <person name="Berman B.P."/>
            <person name="Bhandari D."/>
            <person name="Bolshakov S."/>
            <person name="Borkova D."/>
            <person name="Botchan M.R."/>
            <person name="Bouck J."/>
            <person name="Brokstein P."/>
            <person name="Brottier P."/>
            <person name="Burtis K.C."/>
            <person name="Busam D.A."/>
            <person name="Butler H."/>
            <person name="Cadieu E."/>
            <person name="Center A."/>
            <person name="Chandra I."/>
            <person name="Cherry J.M."/>
            <person name="Cawley S."/>
            <person name="Dahlke C."/>
            <person name="Davenport L.B."/>
            <person name="Davies P."/>
            <person name="de Pablos B."/>
            <person name="Delcher A."/>
            <person name="Deng Z."/>
            <person name="Mays A.D."/>
            <person name="Dew I."/>
            <person name="Dietz S.M."/>
            <person name="Dodson K."/>
            <person name="Doup L.E."/>
            <person name="Downes M."/>
            <person name="Dugan-Rocha S."/>
            <person name="Dunkov B.C."/>
            <person name="Dunn P."/>
            <person name="Durbin K.J."/>
            <person name="Evangelista C.C."/>
            <person name="Ferraz C."/>
            <person name="Ferriera S."/>
            <person name="Fleischmann W."/>
            <person name="Fosler C."/>
            <person name="Gabrielian A.E."/>
            <person name="Garg N.S."/>
            <person name="Gelbart W.M."/>
            <person name="Glasser K."/>
            <person name="Glodek A."/>
            <person name="Gong F."/>
            <person name="Gorrell J.H."/>
            <person name="Gu Z."/>
            <person name="Guan P."/>
            <person name="Harris M."/>
            <person name="Harris N.L."/>
            <person name="Harvey D.A."/>
            <person name="Heiman T.J."/>
            <person name="Hernandez J.R."/>
            <person name="Houck J."/>
            <person name="Hostin D."/>
            <person name="Houston K.A."/>
            <person name="Howland T.J."/>
            <person name="Wei M.-H."/>
            <person name="Ibegwam C."/>
            <person name="Jalali M."/>
            <person name="Kalush F."/>
            <person name="Karpen G.H."/>
            <person name="Ke Z."/>
            <person name="Kennison J.A."/>
            <person name="Ketchum K.A."/>
            <person name="Kimmel B.E."/>
            <person name="Kodira C.D."/>
            <person name="Kraft C.L."/>
            <person name="Kravitz S."/>
            <person name="Kulp D."/>
            <person name="Lai Z."/>
            <person name="Lasko P."/>
            <person name="Lei Y."/>
            <person name="Levitsky A.A."/>
            <person name="Li J.H."/>
            <person name="Li Z."/>
            <person name="Liang Y."/>
            <person name="Lin X."/>
            <person name="Liu X."/>
            <person name="Mattei B."/>
            <person name="McIntosh T.C."/>
            <person name="McLeod M.P."/>
            <person name="McPherson D."/>
            <person name="Merkulov G."/>
            <person name="Milshina N.V."/>
            <person name="Mobarry C."/>
            <person name="Morris J."/>
            <person name="Moshrefi A."/>
            <person name="Mount S.M."/>
            <person name="Moy M."/>
            <person name="Murphy B."/>
            <person name="Murphy L."/>
            <person name="Muzny D.M."/>
            <person name="Nelson D.L."/>
            <person name="Nelson D.R."/>
            <person name="Nelson K.A."/>
            <person name="Nixon K."/>
            <person name="Nusskern D.R."/>
            <person name="Pacleb J.M."/>
            <person name="Palazzolo M."/>
            <person name="Pittman G.S."/>
            <person name="Pan S."/>
            <person name="Pollard J."/>
            <person name="Puri V."/>
            <person name="Reese M.G."/>
            <person name="Reinert K."/>
            <person name="Remington K."/>
            <person name="Saunders R.D.C."/>
            <person name="Scheeler F."/>
            <person name="Shen H."/>
            <person name="Shue B.C."/>
            <person name="Siden-Kiamos I."/>
            <person name="Simpson M."/>
            <person name="Skupski M.P."/>
            <person name="Smith T.J."/>
            <person name="Spier E."/>
            <person name="Spradling A.C."/>
            <person name="Stapleton M."/>
            <person name="Strong R."/>
            <person name="Sun E."/>
            <person name="Svirskas R."/>
            <person name="Tector C."/>
            <person name="Turner R."/>
            <person name="Venter E."/>
            <person name="Wang A.H."/>
            <person name="Wang X."/>
            <person name="Wang Z.-Y."/>
            <person name="Wassarman D.A."/>
            <person name="Weinstock G.M."/>
            <person name="Weissenbach J."/>
            <person name="Williams S.M."/>
            <person name="Woodage T."/>
            <person name="Worley K.C."/>
            <person name="Wu D."/>
            <person name="Yang S."/>
            <person name="Yao Q.A."/>
            <person name="Ye J."/>
            <person name="Yeh R.-F."/>
            <person name="Zaveri J.S."/>
            <person name="Zhan M."/>
            <person name="Zhang G."/>
            <person name="Zhao Q."/>
            <person name="Zheng L."/>
            <person name="Zheng X.H."/>
            <person name="Zhong F.N."/>
            <person name="Zhong W."/>
            <person name="Zhou X."/>
            <person name="Zhu S.C."/>
            <person name="Zhu X."/>
            <person name="Smith H.O."/>
            <person name="Gibbs R.A."/>
            <person name="Myers E.W."/>
            <person name="Rubin G.M."/>
            <person name="Venter J.C."/>
        </authorList>
    </citation>
    <scope>NUCLEOTIDE SEQUENCE [LARGE SCALE GENOMIC DNA]</scope>
    <source>
        <strain>Berkeley</strain>
    </source>
</reference>
<reference evidence="6 8" key="2">
    <citation type="journal article" date="2002" name="Genome Biol.">
        <title>Annotation of the Drosophila melanogaster euchromatic genome: a systematic review.</title>
        <authorList>
            <person name="Misra S."/>
            <person name="Crosby M.A."/>
            <person name="Mungall C.J."/>
            <person name="Matthews B.B."/>
            <person name="Campbell K.S."/>
            <person name="Hradecky P."/>
            <person name="Huang Y."/>
            <person name="Kaminker J.S."/>
            <person name="Millburn G.H."/>
            <person name="Prochnik S.E."/>
            <person name="Smith C.D."/>
            <person name="Tupy J.L."/>
            <person name="Whitfield E.J."/>
            <person name="Bayraktaroglu L."/>
            <person name="Berman B.P."/>
            <person name="Bettencourt B.R."/>
            <person name="Celniker S.E."/>
            <person name="de Grey A.D.N.J."/>
            <person name="Drysdale R.A."/>
            <person name="Harris N.L."/>
            <person name="Richter J."/>
            <person name="Russo S."/>
            <person name="Schroeder A.J."/>
            <person name="Shu S.Q."/>
            <person name="Stapleton M."/>
            <person name="Yamada C."/>
            <person name="Ashburner M."/>
            <person name="Gelbart W.M."/>
            <person name="Rubin G.M."/>
            <person name="Lewis S.E."/>
        </authorList>
    </citation>
    <scope>GENOME REANNOTATION</scope>
    <scope>ALTERNATIVE SPLICING</scope>
    <source>
        <strain>Berkeley</strain>
    </source>
</reference>
<reference evidence="6 7" key="3">
    <citation type="submission" date="2003-02" db="EMBL/GenBank/DDBJ databases">
        <authorList>
            <person name="Stapleton M."/>
            <person name="Brokstein P."/>
            <person name="Hong L."/>
            <person name="Agbayani A."/>
            <person name="Carlson J.W."/>
            <person name="Champe M."/>
            <person name="Chavez C."/>
            <person name="Dorsett V."/>
            <person name="Dresnek D."/>
            <person name="Farfan D."/>
            <person name="Frise E."/>
            <person name="George R.A."/>
            <person name="Gonzalez M."/>
            <person name="Guarin H."/>
            <person name="Kronmiller B."/>
            <person name="Li P.W."/>
            <person name="Liao G."/>
            <person name="Miranda A."/>
            <person name="Mungall C.J."/>
            <person name="Nunoo J."/>
            <person name="Pacleb J.M."/>
            <person name="Paragas V."/>
            <person name="Park S."/>
            <person name="Patel S."/>
            <person name="Phouanenavong S."/>
            <person name="Wan K.H."/>
            <person name="Yu C."/>
            <person name="Lewis S.E."/>
            <person name="Rubin G.M."/>
            <person name="Celniker S.E."/>
        </authorList>
    </citation>
    <scope>NUCLEOTIDE SEQUENCE [LARGE SCALE MRNA] OF 467-822 (ISOFORM F)</scope>
    <source>
        <strain evidence="7">Berkeley</strain>
        <tissue>Larva</tissue>
        <tissue>Pupae</tissue>
    </source>
</reference>
<feature type="chain" id="PRO_0000388711" description="Collagen alpha chain CG42342">
    <location>
        <begin position="1"/>
        <end position="822"/>
    </location>
</feature>
<feature type="topological domain" description="Cytoplasmic" evidence="1">
    <location>
        <begin position="1"/>
        <end position="104"/>
    </location>
</feature>
<feature type="transmembrane region" description="Helical; Signal-anchor for type II membrane protein" evidence="1">
    <location>
        <begin position="105"/>
        <end position="125"/>
    </location>
</feature>
<feature type="topological domain" description="Extracellular" evidence="1">
    <location>
        <begin position="126"/>
        <end position="822"/>
    </location>
</feature>
<feature type="domain" description="Collagen-like 1" evidence="1">
    <location>
        <begin position="241"/>
        <end position="299"/>
    </location>
</feature>
<feature type="domain" description="Collagen-like 2" evidence="1">
    <location>
        <begin position="350"/>
        <end position="409"/>
    </location>
</feature>
<feature type="domain" description="Collagen-like 3" evidence="1">
    <location>
        <begin position="430"/>
        <end position="469"/>
    </location>
</feature>
<feature type="domain" description="Collagen-like 4" evidence="1">
    <location>
        <begin position="493"/>
        <end position="526"/>
    </location>
</feature>
<feature type="domain" description="Collagen-like 5" evidence="1">
    <location>
        <begin position="527"/>
        <end position="586"/>
    </location>
</feature>
<feature type="domain" description="Collagen-like 6" evidence="1">
    <location>
        <begin position="621"/>
        <end position="680"/>
    </location>
</feature>
<feature type="domain" description="Collagen-like 7" evidence="1">
    <location>
        <begin position="681"/>
        <end position="740"/>
    </location>
</feature>
<feature type="region of interest" description="Disordered" evidence="2">
    <location>
        <begin position="1"/>
        <end position="45"/>
    </location>
</feature>
<feature type="region of interest" description="Disordered" evidence="2">
    <location>
        <begin position="66"/>
        <end position="99"/>
    </location>
</feature>
<feature type="region of interest" description="Disordered" evidence="2">
    <location>
        <begin position="169"/>
        <end position="188"/>
    </location>
</feature>
<feature type="region of interest" description="Disordered" evidence="2">
    <location>
        <begin position="205"/>
        <end position="297"/>
    </location>
</feature>
<feature type="region of interest" description="Disordered" evidence="2">
    <location>
        <begin position="345"/>
        <end position="822"/>
    </location>
</feature>
<feature type="coiled-coil region" evidence="1">
    <location>
        <begin position="131"/>
        <end position="162"/>
    </location>
</feature>
<feature type="coiled-coil region" evidence="1">
    <location>
        <begin position="194"/>
        <end position="222"/>
    </location>
</feature>
<feature type="coiled-coil region" evidence="1">
    <location>
        <begin position="790"/>
        <end position="822"/>
    </location>
</feature>
<feature type="compositionally biased region" description="Polar residues" evidence="2">
    <location>
        <begin position="11"/>
        <end position="25"/>
    </location>
</feature>
<feature type="compositionally biased region" description="Low complexity" evidence="2">
    <location>
        <begin position="76"/>
        <end position="94"/>
    </location>
</feature>
<feature type="compositionally biased region" description="Pro residues" evidence="2">
    <location>
        <begin position="242"/>
        <end position="251"/>
    </location>
</feature>
<feature type="compositionally biased region" description="Basic and acidic residues" evidence="2">
    <location>
        <begin position="284"/>
        <end position="293"/>
    </location>
</feature>
<feature type="compositionally biased region" description="Low complexity" evidence="2">
    <location>
        <begin position="360"/>
        <end position="402"/>
    </location>
</feature>
<feature type="compositionally biased region" description="Basic and acidic residues" evidence="2">
    <location>
        <begin position="403"/>
        <end position="412"/>
    </location>
</feature>
<feature type="compositionally biased region" description="Pro residues" evidence="2">
    <location>
        <begin position="431"/>
        <end position="443"/>
    </location>
</feature>
<feature type="compositionally biased region" description="Basic and acidic residues" evidence="2">
    <location>
        <begin position="504"/>
        <end position="517"/>
    </location>
</feature>
<feature type="compositionally biased region" description="Low complexity" evidence="2">
    <location>
        <begin position="522"/>
        <end position="540"/>
    </location>
</feature>
<feature type="compositionally biased region" description="Pro residues" evidence="2">
    <location>
        <begin position="567"/>
        <end position="579"/>
    </location>
</feature>
<feature type="compositionally biased region" description="Basic and acidic residues" evidence="2">
    <location>
        <begin position="583"/>
        <end position="602"/>
    </location>
</feature>
<feature type="compositionally biased region" description="Pro residues" evidence="2">
    <location>
        <begin position="619"/>
        <end position="628"/>
    </location>
</feature>
<feature type="compositionally biased region" description="Basic and acidic residues" evidence="2">
    <location>
        <begin position="638"/>
        <end position="655"/>
    </location>
</feature>
<feature type="compositionally biased region" description="Low complexity" evidence="2">
    <location>
        <begin position="658"/>
        <end position="668"/>
    </location>
</feature>
<feature type="compositionally biased region" description="Acidic residues" evidence="2">
    <location>
        <begin position="793"/>
        <end position="815"/>
    </location>
</feature>
<feature type="splice variant" id="VSP_053159" description="In isoform C." evidence="4">
    <original>IFGPGGTKI</original>
    <variation>GPPGLDGMK</variation>
    <location>
        <begin position="472"/>
        <end position="480"/>
    </location>
</feature>
<feature type="splice variant" id="VSP_053160" description="In isoform C." evidence="4">
    <location>
        <begin position="481"/>
        <end position="683"/>
    </location>
</feature>
<feature type="splice variant" id="VSP_053161" description="In isoform E." evidence="4">
    <original>GAQGE</original>
    <variation>VWGDY</variation>
    <location>
        <begin position="684"/>
        <end position="688"/>
    </location>
</feature>
<feature type="splice variant" id="VSP_053162" description="In isoform E." evidence="4">
    <location>
        <begin position="689"/>
        <end position="822"/>
    </location>
</feature>
<feature type="splice variant" id="VSP_053163" description="In isoform C and isoform F." evidence="4 5">
    <original>PIISTPVHKDYLPDVTQPESNTSDYEQEEEEDDEQAEDNENEYDEYQDNLHNNE</original>
    <variation>NWQAWLKDELNALQHPRSKN</variation>
    <location>
        <begin position="769"/>
        <end position="822"/>
    </location>
</feature>
<gene>
    <name type="ORF">CG42342</name>
</gene>